<gene>
    <name type="ordered locus">Shewana3_0007</name>
</gene>
<sequence length="84" mass="9431">MAQTQSPLQWLATTFIRGYQIFISPLLGPRCRFNPTCSHYAIEAIKVHGTAKGCWFALKRILKCHPLHPGGSDPVPPKNDRCNK</sequence>
<keyword id="KW-0997">Cell inner membrane</keyword>
<keyword id="KW-1003">Cell membrane</keyword>
<keyword id="KW-0472">Membrane</keyword>
<accession>A0KR33</accession>
<dbReference type="EMBL" id="CP000469">
    <property type="protein sequence ID" value="ABK46252.1"/>
    <property type="molecule type" value="Genomic_DNA"/>
</dbReference>
<dbReference type="STRING" id="94122.Shewana3_0007"/>
<dbReference type="KEGG" id="shn:Shewana3_0007"/>
<dbReference type="eggNOG" id="COG0759">
    <property type="taxonomic scope" value="Bacteria"/>
</dbReference>
<dbReference type="HOGENOM" id="CLU_144811_5_2_6"/>
<dbReference type="OrthoDB" id="9801753at2"/>
<dbReference type="Proteomes" id="UP000002589">
    <property type="component" value="Chromosome"/>
</dbReference>
<dbReference type="GO" id="GO:0005886">
    <property type="term" value="C:plasma membrane"/>
    <property type="evidence" value="ECO:0007669"/>
    <property type="project" value="UniProtKB-SubCell"/>
</dbReference>
<dbReference type="HAMAP" id="MF_00386">
    <property type="entry name" value="UPF0161_YidD"/>
    <property type="match status" value="1"/>
</dbReference>
<dbReference type="InterPro" id="IPR002696">
    <property type="entry name" value="Membr_insert_effic_factor_YidD"/>
</dbReference>
<dbReference type="NCBIfam" id="TIGR00278">
    <property type="entry name" value="membrane protein insertion efficiency factor YidD"/>
    <property type="match status" value="1"/>
</dbReference>
<dbReference type="PANTHER" id="PTHR33383">
    <property type="entry name" value="MEMBRANE PROTEIN INSERTION EFFICIENCY FACTOR-RELATED"/>
    <property type="match status" value="1"/>
</dbReference>
<dbReference type="PANTHER" id="PTHR33383:SF1">
    <property type="entry name" value="MEMBRANE PROTEIN INSERTION EFFICIENCY FACTOR-RELATED"/>
    <property type="match status" value="1"/>
</dbReference>
<dbReference type="Pfam" id="PF01809">
    <property type="entry name" value="YidD"/>
    <property type="match status" value="1"/>
</dbReference>
<dbReference type="SMART" id="SM01234">
    <property type="entry name" value="Haemolytic"/>
    <property type="match status" value="1"/>
</dbReference>
<protein>
    <recommendedName>
        <fullName evidence="1">Putative membrane protein insertion efficiency factor</fullName>
    </recommendedName>
</protein>
<evidence type="ECO:0000255" key="1">
    <source>
        <dbReference type="HAMAP-Rule" id="MF_00386"/>
    </source>
</evidence>
<proteinExistence type="inferred from homology"/>
<reference key="1">
    <citation type="submission" date="2006-09" db="EMBL/GenBank/DDBJ databases">
        <title>Complete sequence of chromosome 1 of Shewanella sp. ANA-3.</title>
        <authorList>
            <person name="Copeland A."/>
            <person name="Lucas S."/>
            <person name="Lapidus A."/>
            <person name="Barry K."/>
            <person name="Detter J.C."/>
            <person name="Glavina del Rio T."/>
            <person name="Hammon N."/>
            <person name="Israni S."/>
            <person name="Dalin E."/>
            <person name="Tice H."/>
            <person name="Pitluck S."/>
            <person name="Chertkov O."/>
            <person name="Brettin T."/>
            <person name="Bruce D."/>
            <person name="Han C."/>
            <person name="Tapia R."/>
            <person name="Gilna P."/>
            <person name="Schmutz J."/>
            <person name="Larimer F."/>
            <person name="Land M."/>
            <person name="Hauser L."/>
            <person name="Kyrpides N."/>
            <person name="Kim E."/>
            <person name="Newman D."/>
            <person name="Salticov C."/>
            <person name="Konstantinidis K."/>
            <person name="Klappenback J."/>
            <person name="Tiedje J."/>
            <person name="Richardson P."/>
        </authorList>
    </citation>
    <scope>NUCLEOTIDE SEQUENCE [LARGE SCALE GENOMIC DNA]</scope>
    <source>
        <strain>ANA-3</strain>
    </source>
</reference>
<feature type="chain" id="PRO_1000013129" description="Putative membrane protein insertion efficiency factor">
    <location>
        <begin position="1"/>
        <end position="84"/>
    </location>
</feature>
<comment type="function">
    <text evidence="1">Could be involved in insertion of integral membrane proteins into the membrane.</text>
</comment>
<comment type="subcellular location">
    <subcellularLocation>
        <location evidence="1">Cell inner membrane</location>
        <topology evidence="1">Peripheral membrane protein</topology>
        <orientation evidence="1">Cytoplasmic side</orientation>
    </subcellularLocation>
</comment>
<comment type="similarity">
    <text evidence="1">Belongs to the UPF0161 family.</text>
</comment>
<organism>
    <name type="scientific">Shewanella sp. (strain ANA-3)</name>
    <dbReference type="NCBI Taxonomy" id="94122"/>
    <lineage>
        <taxon>Bacteria</taxon>
        <taxon>Pseudomonadati</taxon>
        <taxon>Pseudomonadota</taxon>
        <taxon>Gammaproteobacteria</taxon>
        <taxon>Alteromonadales</taxon>
        <taxon>Shewanellaceae</taxon>
        <taxon>Shewanella</taxon>
    </lineage>
</organism>
<name>YIDD_SHESA</name>